<accession>Q08857</accession>
<comment type="function">
    <text evidence="2 3 5 6 8 9 10 12 14 16 17 19 20 21 23 24 26">Multifunctional glycoprotein that acts as a receptor for a broad range of ligands. Ligands can be of proteinaceous nature like thrombospondin, fibronectin, collagen or amyloid-beta as well as of lipidic nature such as oxidized low-density lipoprotein (oxLDL), anionic phospholipids, long-chain fatty acids and bacterial diacylated lipopeptides (PubMed:7685021). They are generally multivalent and can therefore engage multiple receptors simultaneously, the resulting formation of CD36 clusters initiates signal transduction and internalization of receptor-ligand complexes. The dependency on coreceptor signaling is strongly ligand specific. Cellular responses to these ligands are involved in angiogenesis, inflammatory response, fatty acid metabolism, taste and dietary fat processing in the intestine (Probable) (PubMed:19847289, PubMed:20037584, PubMed:23395392). Binds long-chain fatty acids and facilitates their transport into cells, thus participating in muscle lipid utilization, adipose energy storage, and gut fat absorption (PubMed:30605677). Mechanistically, binding of fatty acids activates downstream kinase LYN, which phosphorylates the palmitoyltransferase ZDHHC5 and inactivates it, resulting in the subsequent depalmitoylation of CD36 and caveolar endocytosis (By similarity). In the small intestine, plays a role in proximal absorption of dietary fatty acid and cholesterol for optimal chylomicron formation, possibly through the activation of MAPK1/3 (ERK1/2) signaling pathway (By similarity) (PubMed:17507371, PubMed:18753675, PubMed:21610069). Involved in oral fat perception and preferences (PubMed:16276419). Detection into the tongue of long-chain fatty acids leads to a rapid and sustained rise in flux and protein content of pancreatobiliary secretions (By similarity) (PubMed:16276419). In taste receptor cells, mediates the induction of an increase in intracellular calcium levels by long-chain fatty acids, leading to the activation of the gustatory neurons in the nucleus of the solitary tract (PubMed:18162488). Important factor in both ventromedial hypothalamus neuronal sensing of long-chain fatty acid and the regulation of energy and glucose homeostasis (By similarity) (PubMed:23557700). Receptor for thrombospondins, THBS1 and THBS2, mediating their antiangiogenic effects (PubMed:15748999). Involved in inducing apoptosis in podocytes in response to elevated free fatty acids, acting together with THBS1 (PubMed:25835637). As a coreceptor for TLR4:TLR6 heterodimer, promotes inflammation in monocytes/macrophages. Upon ligand binding, such as oxLDL or amyloid-beta 42, interacts with the heterodimer TLR4:TLR6, the complex is internalized and triggers inflammatory response, leading to NF-kappa-B-dependent production of CXCL1, CXCL2 and CCL9 cytokines, via MYD88 signaling pathway, and CCL5 cytokine, via TICAM1 signaling pathway, as well as IL1B secretion, through the priming and activation of the NLRP3 inflammasome (PubMed:20037584, PubMed:23812099). Selective and nonredundant sensor of microbial diacylated lipopeptide that signal via TLR2:TLR6 heterodimer, this cluster triggers signaling from the cell surface, leading to the NF-kappa-B-dependent production of TNF, via MYD88 signaling pathway and subsequently is targeted to the Golgi in a lipid-raft dependent pathway (By similarity) (PubMed:15690042, PubMed:19847289).</text>
</comment>
<comment type="function">
    <text evidence="7 13 15 19">(Microbial infection) Acts as an accessory receptor for M.tuberculosis lipoprotein LprA, in conjunction with coreceptors TLR2 and TLR1; the lipoprotein acts as an agonist to modulate antigen presenting cell functions in response to the pathogen (PubMed:19362712). Directly mediates cytoadherence of Plasmodium falciparum parasitized erythrocytes and the internalization of particles independently of TLR signaling (PubMed:19864601, PubMed:23395392). Mediates uptake of E.coli and S.aureus but has no effect on uptake of M.fortuitum (PubMed:16020694).</text>
</comment>
<comment type="catalytic activity">
    <reaction evidence="2">
        <text>butanoate(out) = butanoate(in)</text>
        <dbReference type="Rhea" id="RHEA:45248"/>
        <dbReference type="ChEBI" id="CHEBI:17968"/>
    </reaction>
    <physiologicalReaction direction="left-to-right" evidence="2">
        <dbReference type="Rhea" id="RHEA:45249"/>
    </physiologicalReaction>
</comment>
<comment type="catalytic activity">
    <reaction evidence="2">
        <text>(9Z)-octadecenoate(out) = (9Z)-octadecenoate(in)</text>
        <dbReference type="Rhea" id="RHEA:33655"/>
        <dbReference type="ChEBI" id="CHEBI:30823"/>
    </reaction>
    <physiologicalReaction direction="left-to-right" evidence="2">
        <dbReference type="Rhea" id="RHEA:33656"/>
    </physiologicalReaction>
</comment>
<comment type="catalytic activity">
    <reaction evidence="2">
        <text>(9Z,12Z)-octadecadienoate(out) = (9Z,12Z)-octadecadienoate(in)</text>
        <dbReference type="Rhea" id="RHEA:45264"/>
        <dbReference type="ChEBI" id="CHEBI:30245"/>
    </reaction>
    <physiologicalReaction direction="left-to-right" evidence="2">
        <dbReference type="Rhea" id="RHEA:45265"/>
    </physiologicalReaction>
</comment>
<comment type="catalytic activity">
    <reaction evidence="2">
        <text>tetradecanoate(out) = tetradecanoate(in)</text>
        <dbReference type="Rhea" id="RHEA:45252"/>
        <dbReference type="ChEBI" id="CHEBI:30807"/>
    </reaction>
    <physiologicalReaction direction="left-to-right" evidence="2">
        <dbReference type="Rhea" id="RHEA:45253"/>
    </physiologicalReaction>
</comment>
<comment type="catalytic activity">
    <reaction evidence="2">
        <text>hexadecanoate(out) = hexadecanoate(in)</text>
        <dbReference type="Rhea" id="RHEA:45256"/>
        <dbReference type="ChEBI" id="CHEBI:7896"/>
    </reaction>
    <physiologicalReaction direction="left-to-right" evidence="2">
        <dbReference type="Rhea" id="RHEA:45257"/>
    </physiologicalReaction>
</comment>
<comment type="catalytic activity">
    <reaction evidence="2">
        <text>tetracosanoate(out) = tetracosanoate(in)</text>
        <dbReference type="Rhea" id="RHEA:45260"/>
        <dbReference type="ChEBI" id="CHEBI:31014"/>
    </reaction>
    <physiologicalReaction direction="left-to-right" evidence="2">
        <dbReference type="Rhea" id="RHEA:45261"/>
    </physiologicalReaction>
</comment>
<comment type="subunit">
    <text evidence="2 6 19">Interacts with THBS1 and THBS2; the interactions mediate the THBS antiangiogenic activity (By similarity) (PubMed:15748999). Upon interaction with a ligand, such as oxidized low-density lipoprotein (oxLDL) or amyloid-beta 42, rapidly forms a complex with TLR4 and TLR6; the complex is internalized and triggers an inflammatory signal. Through its C-terminus, interacts with PTK2, PXN and LYN, but not with SRC. LYN kinase activity is required for facilitating TLR4-TLR6 heterodimerization and signal initiation (By similarity). Interacts with CD9, CD81, FCER1G, ITGB2 and/or ITGB2; forming a membrane heteromeric complex required for the internalization of CD36 and its ligands (PubMed:23395392). Interacts (when palmitoylated) with ARF6; this interaction mediates CD36 transport to the plasma membrane (By similarity).</text>
</comment>
<comment type="interaction">
    <interactant intactId="EBI-8346984">
        <id>Q08857</id>
    </interactant>
    <interactant intactId="EBI-79452">
        <id>P07948</id>
        <label>LYN</label>
    </interactant>
    <organismsDiffer>true</organismsDiffer>
    <experiments>2</experiments>
</comment>
<comment type="subcellular location">
    <subcellularLocation>
        <location evidence="19 23">Cell membrane</location>
        <topology evidence="4">Multi-pass membrane protein</topology>
    </subcellularLocation>
    <subcellularLocation>
        <location evidence="8 17">Apical cell membrane</location>
    </subcellularLocation>
    <subcellularLocation>
        <location evidence="2">Membrane raft</location>
    </subcellularLocation>
    <subcellularLocation>
        <location evidence="2">Golgi apparatus</location>
    </subcellularLocation>
    <text evidence="2">Upon ligand-binding, internalized through dynamin-dependent endocytosis.</text>
</comment>
<comment type="tissue specificity">
    <text evidence="8 9 13 18 19 21">Expressed in the apical side of lingual taste bud cells of the circumvallate papillae (PubMed:16276419, PubMed:21901153). Highly expressed in the intestine on the luminal surface of enterocytes. In small intestines expression levels follow a steep decreasing gradient from proximal to distal segments (PubMed:17507371). Expressed in macrophages (PubMed:23395392, PubMed:23812099). Cell surface expression detected in lung alveolar macrophages, dendritic macrophages and lung macrophages (at protein level) (PubMed:19362712).</text>
</comment>
<comment type="induction">
    <text evidence="18">Expressed in a circadian manner in the circumvallate papillae, levels being lower during the dark period. Protein levels decrease in presence of lipids.</text>
</comment>
<comment type="PTM">
    <text evidence="23">Palmitoylated by ZDHHC5. Palmitoylation is required for proper localization at the plasma membrane.</text>
</comment>
<comment type="PTM">
    <text evidence="11 17">Ubiquitinated at Lys-469 and Lys-472. Ubiquitination is induced by fatty acids such as oleic acid and leads to degradation by the proteasome (PubMed:18353783, PubMed:21610069). Ubiquitination and degradation are inhibited by insulin which blocks the effect of fatty acids (PubMed:18353783).</text>
</comment>
<comment type="disruption phenotype">
    <text evidence="8 9 12 16 18 22">The preference to lipids such linoleic acid is fully abolished in mutant mice as well as the induction of both flux and protein content of pancreatobiliary secretions (PubMed:16276419, PubMed:21901153). Animals with a double knockout of APOE and CD36, fed a Western diet for 12 weeks, exhibit much lower levels of CXCL1, CXCL2 and CCL5 cytokine mRNA expression in the descending aorta and a corresponding decrease in atherosclerotic lesion formation, compared to APOE single knockout mice. Enterocytes from proximal small intestine exhibit reduced uptake of fatty acid and cholesterol. They also show reduced fatty acid incorporation into triglycerides and triglyceride secretion (PubMed:17507371). After oral fat loading, animals have lipoproteins smaller than chylomicron in size in plasma and intestinal lymph (PubMed:18753675). Fewer apoptotic cells and reduced levels of active caspase 3 in glomeruli.</text>
</comment>
<comment type="similarity">
    <text evidence="25">Belongs to the CD36 family.</text>
</comment>
<gene>
    <name type="primary">Cd36</name>
</gene>
<proteinExistence type="evidence at protein level"/>
<name>CD36_MOUSE</name>
<dbReference type="EMBL" id="L23108">
    <property type="protein sequence ID" value="AAA53028.1"/>
    <property type="molecule type" value="mRNA"/>
</dbReference>
<dbReference type="EMBL" id="BC010262">
    <property type="protein sequence ID" value="AAH10262.1"/>
    <property type="molecule type" value="mRNA"/>
</dbReference>
<dbReference type="CCDS" id="CCDS19100.1"/>
<dbReference type="PIR" id="I49590">
    <property type="entry name" value="I49590"/>
</dbReference>
<dbReference type="RefSeq" id="NP_001153027.1">
    <property type="nucleotide sequence ID" value="NM_001159555.2"/>
</dbReference>
<dbReference type="RefSeq" id="NP_001153028.1">
    <property type="nucleotide sequence ID" value="NM_001159556.2"/>
</dbReference>
<dbReference type="RefSeq" id="NP_001153029.1">
    <property type="nucleotide sequence ID" value="NM_001159557.2"/>
</dbReference>
<dbReference type="RefSeq" id="NP_001153030.1">
    <property type="nucleotide sequence ID" value="NM_001159558.2"/>
</dbReference>
<dbReference type="RefSeq" id="NP_001408047.1">
    <property type="nucleotide sequence ID" value="NM_001421118.1"/>
</dbReference>
<dbReference type="RefSeq" id="NP_001408048.1">
    <property type="nucleotide sequence ID" value="NM_001421119.1"/>
</dbReference>
<dbReference type="RefSeq" id="NP_001408049.1">
    <property type="nucleotide sequence ID" value="NM_001421120.1"/>
</dbReference>
<dbReference type="RefSeq" id="NP_001408050.1">
    <property type="nucleotide sequence ID" value="NM_001421121.1"/>
</dbReference>
<dbReference type="RefSeq" id="NP_031669.3">
    <property type="nucleotide sequence ID" value="NM_007643.4"/>
</dbReference>
<dbReference type="RefSeq" id="XP_006535683.1">
    <property type="nucleotide sequence ID" value="XM_006535620.3"/>
</dbReference>
<dbReference type="RefSeq" id="XP_006535684.1">
    <property type="nucleotide sequence ID" value="XM_006535621.3"/>
</dbReference>
<dbReference type="RefSeq" id="XP_006535685.1">
    <property type="nucleotide sequence ID" value="XM_006535622.3"/>
</dbReference>
<dbReference type="RefSeq" id="XP_006535686.1">
    <property type="nucleotide sequence ID" value="XM_006535623.3"/>
</dbReference>
<dbReference type="RefSeq" id="XP_006535687.1">
    <property type="nucleotide sequence ID" value="XM_006535624.3"/>
</dbReference>
<dbReference type="RefSeq" id="XP_006535688.1">
    <property type="nucleotide sequence ID" value="XM_006535625.1"/>
</dbReference>
<dbReference type="RefSeq" id="XP_030109948.1">
    <property type="nucleotide sequence ID" value="XM_030254088.1"/>
</dbReference>
<dbReference type="SMR" id="Q08857"/>
<dbReference type="BioGRID" id="198587">
    <property type="interactions" value="7"/>
</dbReference>
<dbReference type="CORUM" id="Q08857"/>
<dbReference type="FunCoup" id="Q08857">
    <property type="interactions" value="888"/>
</dbReference>
<dbReference type="IntAct" id="Q08857">
    <property type="interactions" value="7"/>
</dbReference>
<dbReference type="STRING" id="10090.ENSMUSP00000133008"/>
<dbReference type="ChEMBL" id="CHEMBL2176845"/>
<dbReference type="TCDB" id="9.B.39.1.1">
    <property type="family name" value="the long chain fatty acid translocase (lcfat) family"/>
</dbReference>
<dbReference type="GlyConnect" id="2588">
    <property type="glycosylation" value="3 N-Linked glycans (1 site)"/>
</dbReference>
<dbReference type="GlyCosmos" id="Q08857">
    <property type="glycosylation" value="8 sites, 2 glycans"/>
</dbReference>
<dbReference type="GlyGen" id="Q08857">
    <property type="glycosylation" value="10 sites, 4 N-linked glycans (3 sites), 1 O-linked glycan (1 site)"/>
</dbReference>
<dbReference type="iPTMnet" id="Q08857"/>
<dbReference type="PhosphoSitePlus" id="Q08857"/>
<dbReference type="SwissPalm" id="Q08857"/>
<dbReference type="jPOST" id="Q08857"/>
<dbReference type="PaxDb" id="10090-ENSMUSP00000131832"/>
<dbReference type="PeptideAtlas" id="Q08857"/>
<dbReference type="ProteomicsDB" id="281267"/>
<dbReference type="Antibodypedia" id="659">
    <property type="antibodies" value="1812 antibodies from 50 providers"/>
</dbReference>
<dbReference type="DNASU" id="12491"/>
<dbReference type="Ensembl" id="ENSMUST00000082367.13">
    <property type="protein sequence ID" value="ENSMUSP00000080974.7"/>
    <property type="gene ID" value="ENSMUSG00000002944.16"/>
</dbReference>
<dbReference type="Ensembl" id="ENSMUST00000165232.8">
    <property type="protein sequence ID" value="ENSMUSP00000126300.2"/>
    <property type="gene ID" value="ENSMUSG00000002944.16"/>
</dbReference>
<dbReference type="Ensembl" id="ENSMUST00000169095.6">
    <property type="protein sequence ID" value="ENSMUSP00000131832.2"/>
    <property type="gene ID" value="ENSMUSG00000002944.16"/>
</dbReference>
<dbReference type="Ensembl" id="ENSMUST00000170051.8">
    <property type="protein sequence ID" value="ENSMUSP00000133008.2"/>
    <property type="gene ID" value="ENSMUSG00000002944.16"/>
</dbReference>
<dbReference type="Ensembl" id="ENSMUST00000197890.5">
    <property type="protein sequence ID" value="ENSMUSP00000143061.2"/>
    <property type="gene ID" value="ENSMUSG00000002944.16"/>
</dbReference>
<dbReference type="GeneID" id="12491"/>
<dbReference type="KEGG" id="mmu:12491"/>
<dbReference type="UCSC" id="uc008wnn.2">
    <property type="organism name" value="mouse"/>
</dbReference>
<dbReference type="AGR" id="MGI:107899"/>
<dbReference type="CTD" id="948"/>
<dbReference type="MGI" id="MGI:107899">
    <property type="gene designation" value="Cd36"/>
</dbReference>
<dbReference type="VEuPathDB" id="HostDB:ENSMUSG00000002944"/>
<dbReference type="eggNOG" id="KOG3776">
    <property type="taxonomic scope" value="Eukaryota"/>
</dbReference>
<dbReference type="GeneTree" id="ENSGT00940000153372"/>
<dbReference type="HOGENOM" id="CLU_019853_0_0_1"/>
<dbReference type="InParanoid" id="Q08857"/>
<dbReference type="OMA" id="AFQNWLV"/>
<dbReference type="OrthoDB" id="195015at2759"/>
<dbReference type="PhylomeDB" id="Q08857"/>
<dbReference type="TreeFam" id="TF317925"/>
<dbReference type="Reactome" id="R-MMU-114608">
    <property type="pathway name" value="Platelet degranulation"/>
</dbReference>
<dbReference type="Reactome" id="R-MMU-1236973">
    <property type="pathway name" value="Cross-presentation of particulate exogenous antigens (phagosomes)"/>
</dbReference>
<dbReference type="Reactome" id="R-MMU-3000471">
    <property type="pathway name" value="Scavenging by Class B Receptors"/>
</dbReference>
<dbReference type="Reactome" id="R-MMU-434313">
    <property type="pathway name" value="Intracellular metabolism of fatty acids regulates insulin secretion"/>
</dbReference>
<dbReference type="Reactome" id="R-MMU-5686938">
    <property type="pathway name" value="Regulation of TLR by endogenous ligand"/>
</dbReference>
<dbReference type="Reactome" id="R-MMU-6798695">
    <property type="pathway name" value="Neutrophil degranulation"/>
</dbReference>
<dbReference type="BioGRID-ORCS" id="12491">
    <property type="hits" value="6 hits in 79 CRISPR screens"/>
</dbReference>
<dbReference type="ChiTaRS" id="Cd36">
    <property type="organism name" value="mouse"/>
</dbReference>
<dbReference type="PRO" id="PR:Q08857"/>
<dbReference type="Proteomes" id="UP000000589">
    <property type="component" value="Chromosome 5"/>
</dbReference>
<dbReference type="RNAct" id="Q08857">
    <property type="molecule type" value="protein"/>
</dbReference>
<dbReference type="Bgee" id="ENSMUSG00000002944">
    <property type="expression patterns" value="Expressed in right lung and 215 other cell types or tissues"/>
</dbReference>
<dbReference type="ExpressionAtlas" id="Q08857">
    <property type="expression patterns" value="baseline and differential"/>
</dbReference>
<dbReference type="GO" id="GO:0045177">
    <property type="term" value="C:apical part of cell"/>
    <property type="evidence" value="ECO:0000314"/>
    <property type="project" value="UniProtKB"/>
</dbReference>
<dbReference type="GO" id="GO:0016324">
    <property type="term" value="C:apical plasma membrane"/>
    <property type="evidence" value="ECO:0007669"/>
    <property type="project" value="UniProtKB-SubCell"/>
</dbReference>
<dbReference type="GO" id="GO:0031526">
    <property type="term" value="C:brush border membrane"/>
    <property type="evidence" value="ECO:0000314"/>
    <property type="project" value="UniProtKB"/>
</dbReference>
<dbReference type="GO" id="GO:0009986">
    <property type="term" value="C:cell surface"/>
    <property type="evidence" value="ECO:0000250"/>
    <property type="project" value="BHF-UCL"/>
</dbReference>
<dbReference type="GO" id="GO:0009897">
    <property type="term" value="C:external side of plasma membrane"/>
    <property type="evidence" value="ECO:0000314"/>
    <property type="project" value="MGI"/>
</dbReference>
<dbReference type="GO" id="GO:0005794">
    <property type="term" value="C:Golgi apparatus"/>
    <property type="evidence" value="ECO:0000314"/>
    <property type="project" value="MGI"/>
</dbReference>
<dbReference type="GO" id="GO:0016020">
    <property type="term" value="C:membrane"/>
    <property type="evidence" value="ECO:0000314"/>
    <property type="project" value="UniProtKB"/>
</dbReference>
<dbReference type="GO" id="GO:0045121">
    <property type="term" value="C:membrane raft"/>
    <property type="evidence" value="ECO:0000314"/>
    <property type="project" value="MGI"/>
</dbReference>
<dbReference type="GO" id="GO:0005886">
    <property type="term" value="C:plasma membrane"/>
    <property type="evidence" value="ECO:0000314"/>
    <property type="project" value="MGI"/>
</dbReference>
<dbReference type="GO" id="GO:0043235">
    <property type="term" value="C:receptor complex"/>
    <property type="evidence" value="ECO:0007669"/>
    <property type="project" value="Ensembl"/>
</dbReference>
<dbReference type="GO" id="GO:0001540">
    <property type="term" value="F:amyloid-beta binding"/>
    <property type="evidence" value="ECO:0007669"/>
    <property type="project" value="Ensembl"/>
</dbReference>
<dbReference type="GO" id="GO:0008035">
    <property type="term" value="F:high-density lipoprotein particle binding"/>
    <property type="evidence" value="ECO:0000314"/>
    <property type="project" value="MGI"/>
</dbReference>
<dbReference type="GO" id="GO:0008289">
    <property type="term" value="F:lipid binding"/>
    <property type="evidence" value="ECO:0000250"/>
    <property type="project" value="BHF-UCL"/>
</dbReference>
<dbReference type="GO" id="GO:0070892">
    <property type="term" value="F:lipoteichoic acid immune receptor activity"/>
    <property type="evidence" value="ECO:0000315"/>
    <property type="project" value="MGI"/>
</dbReference>
<dbReference type="GO" id="GO:0030169">
    <property type="term" value="F:low-density lipoprotein particle binding"/>
    <property type="evidence" value="ECO:0000315"/>
    <property type="project" value="BHF-UCL"/>
</dbReference>
<dbReference type="GO" id="GO:0005041">
    <property type="term" value="F:low-density lipoprotein particle receptor activity"/>
    <property type="evidence" value="ECO:0000315"/>
    <property type="project" value="BHF-UCL"/>
</dbReference>
<dbReference type="GO" id="GO:1901480">
    <property type="term" value="F:oleate transmembrane transporter activity"/>
    <property type="evidence" value="ECO:0007669"/>
    <property type="project" value="Ensembl"/>
</dbReference>
<dbReference type="GO" id="GO:0150025">
    <property type="term" value="F:oxidised low-density lipoprotein particle receptor activity"/>
    <property type="evidence" value="ECO:0007669"/>
    <property type="project" value="Ensembl"/>
</dbReference>
<dbReference type="GO" id="GO:0005044">
    <property type="term" value="F:scavenger receptor activity"/>
    <property type="evidence" value="ECO:0007669"/>
    <property type="project" value="Ensembl"/>
</dbReference>
<dbReference type="GO" id="GO:0015636">
    <property type="term" value="F:short-chain fatty acid transmembrane transporter activity"/>
    <property type="evidence" value="ECO:0007669"/>
    <property type="project" value="Ensembl"/>
</dbReference>
<dbReference type="GO" id="GO:0070053">
    <property type="term" value="F:thrombospondin receptor activity"/>
    <property type="evidence" value="ECO:0007669"/>
    <property type="project" value="Ensembl"/>
</dbReference>
<dbReference type="GO" id="GO:0035325">
    <property type="term" value="F:Toll-like receptor binding"/>
    <property type="evidence" value="ECO:0007669"/>
    <property type="project" value="Ensembl"/>
</dbReference>
<dbReference type="GO" id="GO:1990000">
    <property type="term" value="P:amyloid fibril formation"/>
    <property type="evidence" value="ECO:0000314"/>
    <property type="project" value="UniProtKB"/>
</dbReference>
<dbReference type="GO" id="GO:0150094">
    <property type="term" value="P:amyloid-beta clearance by cellular catabolic process"/>
    <property type="evidence" value="ECO:0007669"/>
    <property type="project" value="Ensembl"/>
</dbReference>
<dbReference type="GO" id="GO:0043277">
    <property type="term" value="P:apoptotic cell clearance"/>
    <property type="evidence" value="ECO:0000315"/>
    <property type="project" value="MGI"/>
</dbReference>
<dbReference type="GO" id="GO:0007155">
    <property type="term" value="P:cell adhesion"/>
    <property type="evidence" value="ECO:0007669"/>
    <property type="project" value="UniProtKB-KW"/>
</dbReference>
<dbReference type="GO" id="GO:0007166">
    <property type="term" value="P:cell surface receptor signaling pathway"/>
    <property type="evidence" value="ECO:0000314"/>
    <property type="project" value="BHF-UCL"/>
</dbReference>
<dbReference type="GO" id="GO:1904646">
    <property type="term" value="P:cellular response to amyloid-beta"/>
    <property type="evidence" value="ECO:0007669"/>
    <property type="project" value="Ensembl"/>
</dbReference>
<dbReference type="GO" id="GO:0071221">
    <property type="term" value="P:cellular response to bacterial lipopeptide"/>
    <property type="evidence" value="ECO:0000315"/>
    <property type="project" value="MGI"/>
</dbReference>
<dbReference type="GO" id="GO:0071726">
    <property type="term" value="P:cellular response to diacyl bacterial lipopeptide"/>
    <property type="evidence" value="ECO:0000250"/>
    <property type="project" value="UniProtKB"/>
</dbReference>
<dbReference type="GO" id="GO:0071447">
    <property type="term" value="P:cellular response to hydroperoxide"/>
    <property type="evidence" value="ECO:0000315"/>
    <property type="project" value="BHF-UCL"/>
</dbReference>
<dbReference type="GO" id="GO:0071222">
    <property type="term" value="P:cellular response to lipopolysaccharide"/>
    <property type="evidence" value="ECO:0000315"/>
    <property type="project" value="MGI"/>
</dbReference>
<dbReference type="GO" id="GO:0071223">
    <property type="term" value="P:cellular response to lipoteichoic acid"/>
    <property type="evidence" value="ECO:0000314"/>
    <property type="project" value="MGI"/>
</dbReference>
<dbReference type="GO" id="GO:0071404">
    <property type="term" value="P:cellular response to low-density lipoprotein particle stimulus"/>
    <property type="evidence" value="ECO:0000314"/>
    <property type="project" value="UniProtKB"/>
</dbReference>
<dbReference type="GO" id="GO:0034599">
    <property type="term" value="P:cellular response to oxidative stress"/>
    <property type="evidence" value="ECO:0000315"/>
    <property type="project" value="BHF-UCL"/>
</dbReference>
<dbReference type="GO" id="GO:0140052">
    <property type="term" value="P:cellular response to oxidised low-density lipoprotein particle stimulus"/>
    <property type="evidence" value="ECO:0007669"/>
    <property type="project" value="Ensembl"/>
</dbReference>
<dbReference type="GO" id="GO:0070508">
    <property type="term" value="P:cholesterol import"/>
    <property type="evidence" value="ECO:0000315"/>
    <property type="project" value="UniProtKB"/>
</dbReference>
<dbReference type="GO" id="GO:0030301">
    <property type="term" value="P:cholesterol transport"/>
    <property type="evidence" value="ECO:0000315"/>
    <property type="project" value="BHF-UCL"/>
</dbReference>
<dbReference type="GO" id="GO:0050830">
    <property type="term" value="P:defense response to Gram-positive bacterium"/>
    <property type="evidence" value="ECO:0000315"/>
    <property type="project" value="MGI"/>
</dbReference>
<dbReference type="GO" id="GO:0097009">
    <property type="term" value="P:energy homeostasis"/>
    <property type="evidence" value="ECO:0000315"/>
    <property type="project" value="UniProtKB"/>
</dbReference>
<dbReference type="GO" id="GO:0050892">
    <property type="term" value="P:intestinal absorption"/>
    <property type="evidence" value="ECO:0000315"/>
    <property type="project" value="UniProtKB"/>
</dbReference>
<dbReference type="GO" id="GO:0030299">
    <property type="term" value="P:intestinal cholesterol absorption"/>
    <property type="evidence" value="ECO:0000315"/>
    <property type="project" value="UniProtKB"/>
</dbReference>
<dbReference type="GO" id="GO:0019915">
    <property type="term" value="P:lipid storage"/>
    <property type="evidence" value="ECO:0000315"/>
    <property type="project" value="BHF-UCL"/>
</dbReference>
<dbReference type="GO" id="GO:1990379">
    <property type="term" value="P:lipid transport across blood-brain barrier"/>
    <property type="evidence" value="ECO:0007669"/>
    <property type="project" value="Ensembl"/>
</dbReference>
<dbReference type="GO" id="GO:0042953">
    <property type="term" value="P:lipoprotein transport"/>
    <property type="evidence" value="ECO:0000315"/>
    <property type="project" value="BHF-UCL"/>
</dbReference>
<dbReference type="GO" id="GO:0015911">
    <property type="term" value="P:long-chain fatty acid import across plasma membrane"/>
    <property type="evidence" value="ECO:0007669"/>
    <property type="project" value="Ensembl"/>
</dbReference>
<dbReference type="GO" id="GO:0044539">
    <property type="term" value="P:long-chain fatty acid import into cell"/>
    <property type="evidence" value="ECO:0000315"/>
    <property type="project" value="UniProtKB"/>
</dbReference>
<dbReference type="GO" id="GO:0034383">
    <property type="term" value="P:low-density lipoprotein particle clearance"/>
    <property type="evidence" value="ECO:0000315"/>
    <property type="project" value="BHF-UCL"/>
</dbReference>
<dbReference type="GO" id="GO:0055096">
    <property type="term" value="P:low-density lipoprotein particle mediated signaling"/>
    <property type="evidence" value="ECO:0000314"/>
    <property type="project" value="BHF-UCL"/>
</dbReference>
<dbReference type="GO" id="GO:0000165">
    <property type="term" value="P:MAPK cascade"/>
    <property type="evidence" value="ECO:0000315"/>
    <property type="project" value="MGI"/>
</dbReference>
<dbReference type="GO" id="GO:0016525">
    <property type="term" value="P:negative regulation of angiogenesis"/>
    <property type="evidence" value="ECO:0000315"/>
    <property type="project" value="UniProtKB"/>
</dbReference>
<dbReference type="GO" id="GO:0010629">
    <property type="term" value="P:negative regulation of gene expression"/>
    <property type="evidence" value="ECO:0000315"/>
    <property type="project" value="BHF-UCL"/>
</dbReference>
<dbReference type="GO" id="GO:0042308">
    <property type="term" value="P:negative regulation of protein import into nucleus"/>
    <property type="evidence" value="ECO:0000315"/>
    <property type="project" value="BHF-UCL"/>
</dbReference>
<dbReference type="GO" id="GO:0000122">
    <property type="term" value="P:negative regulation of transcription by RNA polymerase II"/>
    <property type="evidence" value="ECO:0000315"/>
    <property type="project" value="BHF-UCL"/>
</dbReference>
<dbReference type="GO" id="GO:0038060">
    <property type="term" value="P:nitric oxide-cGMP-mediated signaling"/>
    <property type="evidence" value="ECO:0007669"/>
    <property type="project" value="Ensembl"/>
</dbReference>
<dbReference type="GO" id="GO:0150024">
    <property type="term" value="P:oxidised low-density lipoprotein particle clearance"/>
    <property type="evidence" value="ECO:0007669"/>
    <property type="project" value="Ensembl"/>
</dbReference>
<dbReference type="GO" id="GO:0006910">
    <property type="term" value="P:phagocytosis, recognition"/>
    <property type="evidence" value="ECO:0000314"/>
    <property type="project" value="MGI"/>
</dbReference>
<dbReference type="GO" id="GO:0034381">
    <property type="term" value="P:plasma lipoprotein particle clearance"/>
    <property type="evidence" value="ECO:0000315"/>
    <property type="project" value="BHF-UCL"/>
</dbReference>
<dbReference type="GO" id="GO:0030194">
    <property type="term" value="P:positive regulation of blood coagulation"/>
    <property type="evidence" value="ECO:0000315"/>
    <property type="project" value="BHF-UCL"/>
</dbReference>
<dbReference type="GO" id="GO:2000334">
    <property type="term" value="P:positive regulation of blood microparticle formation"/>
    <property type="evidence" value="ECO:0000315"/>
    <property type="project" value="BHF-UCL"/>
</dbReference>
<dbReference type="GO" id="GO:0043123">
    <property type="term" value="P:positive regulation of canonical NF-kappaB signal transduction"/>
    <property type="evidence" value="ECO:0000315"/>
    <property type="project" value="MGI"/>
</dbReference>
<dbReference type="GO" id="GO:0001954">
    <property type="term" value="P:positive regulation of cell-matrix adhesion"/>
    <property type="evidence" value="ECO:0007669"/>
    <property type="project" value="Ensembl"/>
</dbReference>
<dbReference type="GO" id="GO:0010886">
    <property type="term" value="P:positive regulation of cholesterol storage"/>
    <property type="evidence" value="ECO:0000315"/>
    <property type="project" value="BHF-UCL"/>
</dbReference>
<dbReference type="GO" id="GO:0120162">
    <property type="term" value="P:positive regulation of cold-induced thermogenesis"/>
    <property type="evidence" value="ECO:0000315"/>
    <property type="project" value="YuBioLab"/>
</dbReference>
<dbReference type="GO" id="GO:0007204">
    <property type="term" value="P:positive regulation of cytosolic calcium ion concentration"/>
    <property type="evidence" value="ECO:0000314"/>
    <property type="project" value="UniProtKB"/>
</dbReference>
<dbReference type="GO" id="GO:0070374">
    <property type="term" value="P:positive regulation of ERK1 and ERK2 cascade"/>
    <property type="evidence" value="ECO:0000315"/>
    <property type="project" value="UniProtKB"/>
</dbReference>
<dbReference type="GO" id="GO:0010628">
    <property type="term" value="P:positive regulation of gene expression"/>
    <property type="evidence" value="ECO:0000315"/>
    <property type="project" value="ARUK-UCL"/>
</dbReference>
<dbReference type="GO" id="GO:0032731">
    <property type="term" value="P:positive regulation of interleukin-1 beta production"/>
    <property type="evidence" value="ECO:0000314"/>
    <property type="project" value="UniProtKB"/>
</dbReference>
<dbReference type="GO" id="GO:0032735">
    <property type="term" value="P:positive regulation of interleukin-12 production"/>
    <property type="evidence" value="ECO:0000315"/>
    <property type="project" value="MGI"/>
</dbReference>
<dbReference type="GO" id="GO:0032755">
    <property type="term" value="P:positive regulation of interleukin-6 production"/>
    <property type="evidence" value="ECO:0000315"/>
    <property type="project" value="MGI"/>
</dbReference>
<dbReference type="GO" id="GO:0060907">
    <property type="term" value="P:positive regulation of macrophage cytokine production"/>
    <property type="evidence" value="ECO:0000315"/>
    <property type="project" value="MGI"/>
</dbReference>
<dbReference type="GO" id="GO:0010744">
    <property type="term" value="P:positive regulation of macrophage derived foam cell differentiation"/>
    <property type="evidence" value="ECO:0000315"/>
    <property type="project" value="BHF-UCL"/>
</dbReference>
<dbReference type="GO" id="GO:0043410">
    <property type="term" value="P:positive regulation of MAPK cascade"/>
    <property type="evidence" value="ECO:0000315"/>
    <property type="project" value="MGI"/>
</dbReference>
<dbReference type="GO" id="GO:0045429">
    <property type="term" value="P:positive regulation of nitric oxide biosynthetic process"/>
    <property type="evidence" value="ECO:0000316"/>
    <property type="project" value="ARUK-UCL"/>
</dbReference>
<dbReference type="GO" id="GO:1900227">
    <property type="term" value="P:positive regulation of NLRP3 inflammasome complex assembly"/>
    <property type="evidence" value="ECO:0000314"/>
    <property type="project" value="UniProtKB"/>
</dbReference>
<dbReference type="GO" id="GO:0060100">
    <property type="term" value="P:positive regulation of phagocytosis, engulfment"/>
    <property type="evidence" value="ECO:0000314"/>
    <property type="project" value="MGI"/>
</dbReference>
<dbReference type="GO" id="GO:1903428">
    <property type="term" value="P:positive regulation of reactive oxygen species biosynthetic process"/>
    <property type="evidence" value="ECO:0000315"/>
    <property type="project" value="ARUK-UCL"/>
</dbReference>
<dbReference type="GO" id="GO:2000379">
    <property type="term" value="P:positive regulation of reactive oxygen species metabolic process"/>
    <property type="evidence" value="ECO:0000315"/>
    <property type="project" value="BHF-UCL"/>
</dbReference>
<dbReference type="GO" id="GO:0032760">
    <property type="term" value="P:positive regulation of tumor necrosis factor production"/>
    <property type="evidence" value="ECO:0000315"/>
    <property type="project" value="MGI"/>
</dbReference>
<dbReference type="GO" id="GO:0031623">
    <property type="term" value="P:receptor internalization"/>
    <property type="evidence" value="ECO:0000314"/>
    <property type="project" value="UniProtKB"/>
</dbReference>
<dbReference type="GO" id="GO:0098900">
    <property type="term" value="P:regulation of action potential"/>
    <property type="evidence" value="ECO:0000315"/>
    <property type="project" value="ARUK-UCL"/>
</dbReference>
<dbReference type="GO" id="GO:2000121">
    <property type="term" value="P:regulation of removal of superoxide radicals"/>
    <property type="evidence" value="ECO:0000315"/>
    <property type="project" value="BHF-UCL"/>
</dbReference>
<dbReference type="GO" id="GO:0034121">
    <property type="term" value="P:regulation of toll-like receptor signaling pathway"/>
    <property type="evidence" value="ECO:0007669"/>
    <property type="project" value="Ensembl"/>
</dbReference>
<dbReference type="GO" id="GO:0009617">
    <property type="term" value="P:response to bacterium"/>
    <property type="evidence" value="ECO:0000270"/>
    <property type="project" value="MGI"/>
</dbReference>
<dbReference type="GO" id="GO:0070542">
    <property type="term" value="P:response to fatty acid"/>
    <property type="evidence" value="ECO:0000314"/>
    <property type="project" value="UniProtKB"/>
</dbReference>
<dbReference type="GO" id="GO:0070543">
    <property type="term" value="P:response to linoleic acid"/>
    <property type="evidence" value="ECO:0000314"/>
    <property type="project" value="UniProtKB"/>
</dbReference>
<dbReference type="GO" id="GO:0033993">
    <property type="term" value="P:response to lipid"/>
    <property type="evidence" value="ECO:0000314"/>
    <property type="project" value="UniProtKB"/>
</dbReference>
<dbReference type="GO" id="GO:0035634">
    <property type="term" value="P:response to stilbenoid"/>
    <property type="evidence" value="ECO:0000270"/>
    <property type="project" value="UniProtKB"/>
</dbReference>
<dbReference type="GO" id="GO:0050909">
    <property type="term" value="P:sensory perception of taste"/>
    <property type="evidence" value="ECO:0000314"/>
    <property type="project" value="UniProtKB"/>
</dbReference>
<dbReference type="GO" id="GO:0034197">
    <property type="term" value="P:triglyceride transport"/>
    <property type="evidence" value="ECO:0000315"/>
    <property type="project" value="UniProtKB"/>
</dbReference>
<dbReference type="InterPro" id="IPR005428">
    <property type="entry name" value="CD36/SCARB1/SNMP1"/>
</dbReference>
<dbReference type="InterPro" id="IPR002159">
    <property type="entry name" value="CD36_fam"/>
</dbReference>
<dbReference type="PANTHER" id="PTHR11923:SF12">
    <property type="entry name" value="PLATELET GLYCOPROTEIN 4"/>
    <property type="match status" value="1"/>
</dbReference>
<dbReference type="PANTHER" id="PTHR11923">
    <property type="entry name" value="SCAVENGER RECEPTOR CLASS B TYPE-1 SR-B1"/>
    <property type="match status" value="1"/>
</dbReference>
<dbReference type="Pfam" id="PF01130">
    <property type="entry name" value="CD36"/>
    <property type="match status" value="1"/>
</dbReference>
<dbReference type="PRINTS" id="PR01610">
    <property type="entry name" value="CD36ANTIGEN"/>
</dbReference>
<dbReference type="PRINTS" id="PR01609">
    <property type="entry name" value="CD36FAMILY"/>
</dbReference>
<feature type="chain" id="PRO_0000144153" description="Platelet glycoprotein 4">
    <location>
        <begin position="1"/>
        <end position="472"/>
    </location>
</feature>
<feature type="topological domain" description="Cytoplasmic" evidence="4">
    <location>
        <begin position="1"/>
        <end position="7"/>
    </location>
</feature>
<feature type="transmembrane region" description="Helical" evidence="4">
    <location>
        <begin position="8"/>
        <end position="29"/>
    </location>
</feature>
<feature type="topological domain" description="Extracellular" evidence="4">
    <location>
        <begin position="30"/>
        <end position="439"/>
    </location>
</feature>
<feature type="transmembrane region" description="Helical" evidence="4">
    <location>
        <begin position="440"/>
        <end position="461"/>
    </location>
</feature>
<feature type="topological domain" description="Cytoplasmic" evidence="4">
    <location>
        <begin position="462"/>
        <end position="472"/>
    </location>
</feature>
<feature type="region of interest" description="Required for interaction with thrombospondins, THBS1 and THBS2" evidence="6">
    <location>
        <begin position="93"/>
        <end position="120"/>
    </location>
</feature>
<feature type="region of interest" description="Interaction with PTK2, PXN and LYN" evidence="2">
    <location>
        <begin position="460"/>
        <end position="472"/>
    </location>
</feature>
<feature type="site" description="Critical for TLR4-TLR6 dimerization and signaling" evidence="2">
    <location>
        <position position="463"/>
    </location>
</feature>
<feature type="lipid moiety-binding region" description="S-palmitoyl cysteine" evidence="1">
    <location>
        <position position="3"/>
    </location>
</feature>
<feature type="lipid moiety-binding region" description="S-palmitoyl cysteine" evidence="1">
    <location>
        <position position="7"/>
    </location>
</feature>
<feature type="lipid moiety-binding region" description="S-palmitoyl cysteine" evidence="1">
    <location>
        <position position="464"/>
    </location>
</feature>
<feature type="lipid moiety-binding region" description="S-palmitoyl cysteine" evidence="1">
    <location>
        <position position="466"/>
    </location>
</feature>
<feature type="glycosylation site" description="N-linked (GlcNAc...) asparagine" evidence="4">
    <location>
        <position position="79"/>
    </location>
</feature>
<feature type="glycosylation site" description="N-linked (GlcNAc...) asparagine" evidence="4">
    <location>
        <position position="134"/>
    </location>
</feature>
<feature type="glycosylation site" description="N-linked (GlcNAc...) asparagine" evidence="4">
    <location>
        <position position="205"/>
    </location>
</feature>
<feature type="glycosylation site" description="N-linked (GlcNAc...) asparagine" evidence="4">
    <location>
        <position position="220"/>
    </location>
</feature>
<feature type="glycosylation site" description="N-linked (GlcNAc...) asparagine" evidence="4">
    <location>
        <position position="235"/>
    </location>
</feature>
<feature type="glycosylation site" description="N-linked (GlcNAc...) asparagine" evidence="4">
    <location>
        <position position="247"/>
    </location>
</feature>
<feature type="glycosylation site" description="N-linked (GlcNAc...) asparagine" evidence="4">
    <location>
        <position position="321"/>
    </location>
</feature>
<feature type="glycosylation site" description="N-linked (GlcNAc...) asparagine" evidence="4">
    <location>
        <position position="417"/>
    </location>
</feature>
<feature type="disulfide bond" evidence="1">
    <location>
        <begin position="243"/>
        <end position="311"/>
    </location>
</feature>
<feature type="disulfide bond" evidence="1">
    <location>
        <begin position="272"/>
        <end position="333"/>
    </location>
</feature>
<feature type="disulfide bond" evidence="1">
    <location>
        <begin position="313"/>
        <end position="322"/>
    </location>
</feature>
<feature type="cross-link" description="Glycyl lysine isopeptide (Lys-Gly) (interchain with G-Cter in ubiquitin)" evidence="2">
    <location>
        <position position="469"/>
    </location>
</feature>
<feature type="cross-link" description="Glycyl lysine isopeptide (Lys-Gly) (interchain with G-Cter in ubiquitin)" evidence="2">
    <location>
        <position position="472"/>
    </location>
</feature>
<organism>
    <name type="scientific">Mus musculus</name>
    <name type="common">Mouse</name>
    <dbReference type="NCBI Taxonomy" id="10090"/>
    <lineage>
        <taxon>Eukaryota</taxon>
        <taxon>Metazoa</taxon>
        <taxon>Chordata</taxon>
        <taxon>Craniata</taxon>
        <taxon>Vertebrata</taxon>
        <taxon>Euteleostomi</taxon>
        <taxon>Mammalia</taxon>
        <taxon>Eutheria</taxon>
        <taxon>Euarchontoglires</taxon>
        <taxon>Glires</taxon>
        <taxon>Rodentia</taxon>
        <taxon>Myomorpha</taxon>
        <taxon>Muroidea</taxon>
        <taxon>Muridae</taxon>
        <taxon>Murinae</taxon>
        <taxon>Mus</taxon>
        <taxon>Mus</taxon>
    </lineage>
</organism>
<sequence length="472" mass="52698">MGCDRNCGLIAGAVIGAVLAVFGGILMPVGDMLIEKTIKREVVLEEGTTAFKNWVKTGTTVYRQFWIFDVQNPDDVAKNSSKIKVKQRGPYTYRVRYLAKENITQDPEDHTVSFVQPNGAIFEPSLSVGTEDDNFTVLNLAVAAAPHIYQNSFVQVVLNSLIKKSKSSMFQTRSLKELLWGYKDPFLSLVPYPISTTVGVFYPYNDTVDGVYKVFNGKDNISKVAIIESYKGKRNLSYWPSYCDMINGTDAASFPPFVEKSRTLRFFSSDICRSIYAVFGSEIDLKGIPVYRFVLPANAFASPLQNPDNHCFCTEKVISNNCTSYGVLDIGKCKEGKPVYISLPHFLHASPDVSEPIEGLHPNEDEHRTYLDVEPITGFTLQFAKRLQVNILVKPARKIEALKNLKRPYIVPILWLNETGTIGDEKAEMFKTQVTGKIKLLGMVEMALLGIGVVMFVAFMISYCACKSKNGK</sequence>
<reference key="1">
    <citation type="journal article" date="1993" name="J. Biol. Chem.">
        <title>CD36 is a receptor for oxidized low density lipoprotein.</title>
        <authorList>
            <person name="Endemann G."/>
            <person name="Stanton L.W."/>
            <person name="Madden K.S."/>
            <person name="Bryant C.M."/>
            <person name="White R.T."/>
            <person name="Protter A.A."/>
        </authorList>
    </citation>
    <scope>NUCLEOTIDE SEQUENCE [MRNA]</scope>
    <source>
        <tissue>Peritoneal macrophage</tissue>
    </source>
</reference>
<reference key="2">
    <citation type="journal article" date="2004" name="Genome Res.">
        <title>The status, quality, and expansion of the NIH full-length cDNA project: the Mammalian Gene Collection (MGC).</title>
        <authorList>
            <consortium name="The MGC Project Team"/>
        </authorList>
    </citation>
    <scope>NUCLEOTIDE SEQUENCE [LARGE SCALE MRNA]</scope>
    <source>
        <strain>C57BL/6J</strain>
        <tissue>Mammary gland</tissue>
    </source>
</reference>
<reference key="3">
    <citation type="journal article" date="2005" name="J. Clin. Invest.">
        <title>CD36 involvement in orosensory detection of dietary lipids, spontaneous fat preference, and digestive secretions.</title>
        <authorList>
            <person name="Laugerette F."/>
            <person name="Passilly-Degrace P."/>
            <person name="Patris B."/>
            <person name="Niot I."/>
            <person name="Febbraio M."/>
            <person name="Montmayeur J.P."/>
            <person name="Besnard P."/>
        </authorList>
    </citation>
    <scope>FUNCTION</scope>
    <scope>TISSUE SPECIFICITY</scope>
    <scope>SUBCELLULAR LOCATION</scope>
    <scope>DISRUPTION PHENOTYPE</scope>
</reference>
<reference key="4">
    <citation type="journal article" date="2005" name="Matrix Biol.">
        <title>The antiangiogenic effect of thrombospondin-2 is mediated by CD36 and modulated by histidine-rich glycoprotein.</title>
        <authorList>
            <person name="Simantov R."/>
            <person name="Febbraio M."/>
            <person name="Silverstein R.L."/>
        </authorList>
    </citation>
    <scope>INTERACTION WITH THBS2</scope>
    <scope>FUNCTION</scope>
</reference>
<reference key="5">
    <citation type="journal article" date="2005" name="Nature">
        <title>CD36 is a sensor of diacylglycerides.</title>
        <authorList>
            <person name="Hoebe K."/>
            <person name="Georgel P."/>
            <person name="Rutschmann S."/>
            <person name="Du X."/>
            <person name="Mudd S."/>
            <person name="Crozat K."/>
            <person name="Sovath S."/>
            <person name="Shamel L."/>
            <person name="Hartung T."/>
            <person name="Zaehringer U."/>
            <person name="Beutler B."/>
        </authorList>
    </citation>
    <scope>FUNCTION</scope>
</reference>
<reference key="6">
    <citation type="journal article" date="2005" name="Science">
        <title>Drosophila RNAi screen reveals CD36 family member required for mycobacterial infection.</title>
        <authorList>
            <person name="Philips J.A."/>
            <person name="Rubin E.J."/>
            <person name="Perrimon N."/>
        </authorList>
    </citation>
    <scope>FUNCTION (MICROBIAL INFECTION)</scope>
</reference>
<reference key="7">
    <citation type="journal article" date="2007" name="J. Biol. Chem.">
        <title>CD36 is important for fatty acid and cholesterol uptake by the proximal but not distal intestine.</title>
        <authorList>
            <person name="Nassir F."/>
            <person name="Wilson B."/>
            <person name="Han X."/>
            <person name="Gross R.W."/>
            <person name="Abumrad N.A."/>
        </authorList>
    </citation>
    <scope>FUNCTION</scope>
    <scope>DISRUPTION PHENOTYPE</scope>
    <scope>TISSUE SPECIFICITY</scope>
</reference>
<reference key="8">
    <citation type="journal article" date="2008" name="FASEB J.">
        <title>The gustatory pathway is involved in CD36-mediated orosensory perception of long-chain fatty acids in the mouse.</title>
        <authorList>
            <person name="Gaillard D."/>
            <person name="Laugerette F."/>
            <person name="Darcel N."/>
            <person name="El-Yassimi A."/>
            <person name="Passilly-Degrace P."/>
            <person name="Hichami A."/>
            <person name="Khan N.A."/>
            <person name="Montmayeur J.P."/>
            <person name="Besnard P."/>
        </authorList>
    </citation>
    <scope>FUNCTION</scope>
</reference>
<reference key="9">
    <citation type="journal article" date="2008" name="J. Biol. Chem.">
        <title>Opposite regulation of CD36 ubiquitination by fatty acids and insulin: effects on fatty acid uptake.</title>
        <authorList>
            <person name="Smith J."/>
            <person name="Su X."/>
            <person name="El-Maghrabi R."/>
            <person name="Stahl P.D."/>
            <person name="Abumrad N.A."/>
        </authorList>
    </citation>
    <scope>UBIQUITINATION</scope>
</reference>
<reference key="10">
    <citation type="journal article" date="2009" name="Cell. Immunol.">
        <title>TLR2 and its co-receptors determine responses of macrophages and dendritic cells to lipoproteins of Mycobacterium tuberculosis.</title>
        <authorList>
            <person name="Drage M.G."/>
            <person name="Pecora N.D."/>
            <person name="Hise A.G."/>
            <person name="Febbraio M."/>
            <person name="Silverstein R.L."/>
            <person name="Golenbock D.T."/>
            <person name="Boom W.H."/>
            <person name="Harding C.V."/>
        </authorList>
    </citation>
    <scope>FUNCTION (MICROBIAL INFECTION)</scope>
    <scope>TISSUE SPECIFICITY</scope>
    <source>
        <tissue>Macrophage</tissue>
    </source>
</reference>
<reference key="11">
    <citation type="journal article" date="2009" name="J. Immunol.">
        <title>CD36 and TLR interactions in inflammation and phagocytosis: implications for malaria.</title>
        <authorList>
            <person name="Erdman L.K."/>
            <person name="Cosio G."/>
            <person name="Helmers A.J."/>
            <person name="Gowda D.C."/>
            <person name="Grinstein S."/>
            <person name="Kain K.C."/>
        </authorList>
    </citation>
    <scope>FUNCTION (MICROBIAL INFECTION)</scope>
</reference>
<reference key="12">
    <citation type="journal article" date="2009" name="J. Lipid Res.">
        <title>Chylomicron remnants are increased in the postprandial state in CD36 deficiency.</title>
        <authorList>
            <person name="Masuda D."/>
            <person name="Hirano K."/>
            <person name="Oku H."/>
            <person name="Sandoval J.C."/>
            <person name="Kawase R."/>
            <person name="Yuasa-Kawase M."/>
            <person name="Yamashita Y."/>
            <person name="Takada M."/>
            <person name="Tsubakio-Yamamoto K."/>
            <person name="Tochino Y."/>
            <person name="Koseki M."/>
            <person name="Matsuura F."/>
            <person name="Nishida M."/>
            <person name="Kawamoto T."/>
            <person name="Ishigami M."/>
            <person name="Hori M."/>
            <person name="Shimomura I."/>
            <person name="Yamashita S."/>
        </authorList>
    </citation>
    <scope>FUNCTION</scope>
    <scope>DISRUPTION PHENOTYPE</scope>
</reference>
<reference key="13">
    <citation type="journal article" date="2009" name="PLoS ONE">
        <title>Soluble CD36 ectodomain binds negatively charged diacylglycerol ligands and acts as a co-receptor for TLR2.</title>
        <authorList>
            <person name="Jimenez-Dalmaroni M.J."/>
            <person name="Xiao N."/>
            <person name="Corper A.L."/>
            <person name="Verdino P."/>
            <person name="Ainge G.D."/>
            <person name="Larsen D.S."/>
            <person name="Painter G.F."/>
            <person name="Rudd P.M."/>
            <person name="Dwek R.A."/>
            <person name="Hoebe K."/>
            <person name="Beutler B."/>
            <person name="Wilson I.A."/>
        </authorList>
    </citation>
    <scope>FUNCTION</scope>
</reference>
<reference key="14">
    <citation type="journal article" date="2009" name="Sci. Signal.">
        <title>CD36, a scavenger receptor involved in immunity, metabolism, angiogenesis, and behavior.</title>
        <authorList>
            <person name="Silverstein R.L."/>
            <person name="Febbraio M."/>
        </authorList>
    </citation>
    <scope>REVIEW OF FUNCTION</scope>
</reference>
<reference key="15">
    <citation type="journal article" date="2010" name="Cell">
        <title>A tissue-specific atlas of mouse protein phosphorylation and expression.</title>
        <authorList>
            <person name="Huttlin E.L."/>
            <person name="Jedrychowski M.P."/>
            <person name="Elias J.E."/>
            <person name="Goswami T."/>
            <person name="Rad R."/>
            <person name="Beausoleil S.A."/>
            <person name="Villen J."/>
            <person name="Haas W."/>
            <person name="Sowa M.E."/>
            <person name="Gygi S.P."/>
        </authorList>
    </citation>
    <scope>IDENTIFICATION BY MASS SPECTROMETRY [LARGE SCALE ANALYSIS]</scope>
    <source>
        <tissue>Brown adipose tissue</tissue>
        <tissue>Heart</tissue>
        <tissue>Kidney</tissue>
        <tissue>Liver</tissue>
        <tissue>Lung</tissue>
        <tissue>Pancreas</tissue>
        <tissue>Spleen</tissue>
        <tissue>Testis</tissue>
    </source>
</reference>
<reference key="16">
    <citation type="journal article" date="2010" name="Nat. Immunol.">
        <title>CD36 ligands promote sterile inflammation through assembly of a Toll-like receptor 4 and 6 heterodimer.</title>
        <authorList>
            <person name="Stewart C.R."/>
            <person name="Stuart L.M."/>
            <person name="Wilkinson K."/>
            <person name="van Gils J.M."/>
            <person name="Deng J."/>
            <person name="Halle A."/>
            <person name="Rayner K.J."/>
            <person name="Boyer L."/>
            <person name="Zhong R."/>
            <person name="Frazier W.A."/>
            <person name="Lacy-Hulbert A."/>
            <person name="El Khoury J."/>
            <person name="Golenbock D.T."/>
            <person name="Moore K.J."/>
        </authorList>
    </citation>
    <scope>FUNCTION</scope>
    <scope>DISRUPTION PHENOTYPE</scope>
</reference>
<reference key="17">
    <citation type="journal article" date="2011" name="J. Biol. Chem.">
        <title>Luminal lipid regulates CD36 levels and downstream signaling to stimulate chylomicron synthesis.</title>
        <authorList>
            <person name="Tran T.T."/>
            <person name="Poirier H."/>
            <person name="Clement L."/>
            <person name="Nassir F."/>
            <person name="Pelsers M.M."/>
            <person name="Petit V."/>
            <person name="Degrace P."/>
            <person name="Monnot M.C."/>
            <person name="Glatz J.F."/>
            <person name="Abumrad N.A."/>
            <person name="Besnard P."/>
            <person name="Niot I."/>
        </authorList>
    </citation>
    <scope>FUNCTION</scope>
    <scope>SUBCELLULAR LOCATION</scope>
    <scope>UBIQUITINATION</scope>
</reference>
<reference key="18">
    <citation type="journal article" date="2011" name="PLoS ONE">
        <title>The lipid-sensor candidates CD36 and GPR120 are differentially regulated by dietary lipids in mouse taste buds: impact on spontaneous fat preference.</title>
        <authorList>
            <person name="Martin C."/>
            <person name="Passilly-Degrace P."/>
            <person name="Gaillard D."/>
            <person name="Merlin J.F."/>
            <person name="Chevrot M."/>
            <person name="Besnard P."/>
        </authorList>
    </citation>
    <scope>TISSUE SPECIFICITY</scope>
    <scope>INDUCTION</scope>
    <scope>DISRUPTION PHENOTYPE</scope>
</reference>
<reference key="19">
    <citation type="journal article" date="2013" name="Dev. Cell">
        <title>Multimolecular signaling complexes enable Syk-mediated signaling of CD36 internalization.</title>
        <authorList>
            <person name="Heit B."/>
            <person name="Kim H."/>
            <person name="Cosio G."/>
            <person name="Castano D."/>
            <person name="Collins R."/>
            <person name="Lowell C.A."/>
            <person name="Kain K.C."/>
            <person name="Trimble W.S."/>
            <person name="Grinstein S."/>
        </authorList>
    </citation>
    <scope>FUNCTION</scope>
    <scope>FUNCTION (MICROBIAL INFECTION)</scope>
    <scope>INTERACTION WITH FCER1G; ITGB1; ITGB2; CD9 AND CD81</scope>
    <scope>SUBCELLULAR LOCATION</scope>
    <scope>TISSUE SPECIFICITY</scope>
</reference>
<reference key="20">
    <citation type="journal article" date="2013" name="Diabetes">
        <title>FAT/CD36: a major regulator of neuronal fatty acid sensing and energy homeostasis in rats and mice.</title>
        <authorList>
            <person name="Le Foll C."/>
            <person name="Dunn-Meynell A."/>
            <person name="Musatov S."/>
            <person name="Magnan C."/>
            <person name="Levin B.E."/>
        </authorList>
    </citation>
    <scope>FUNCTION</scope>
</reference>
<reference key="21">
    <citation type="journal article" date="2013" name="Nat. Immunol.">
        <title>CD36 coordinates NLRP3 inflammasome activation by facilitating intracellular nucleation of soluble ligands into particulate ligands in sterile inflammation.</title>
        <authorList>
            <person name="Sheedy F.J."/>
            <person name="Grebe A."/>
            <person name="Rayner K.J."/>
            <person name="Kalantari P."/>
            <person name="Ramkhelawon B."/>
            <person name="Carpenter S.B."/>
            <person name="Becker C.E."/>
            <person name="Ediriweera H.N."/>
            <person name="Mullick A.E."/>
            <person name="Golenbock D.T."/>
            <person name="Stuart L.M."/>
            <person name="Latz E."/>
            <person name="Fitzgerald K.A."/>
            <person name="Moore K.J."/>
        </authorList>
    </citation>
    <scope>FUNCTION</scope>
    <scope>TISSUE SPECIFICITY</scope>
</reference>
<reference key="22">
    <citation type="journal article" date="2015" name="Biochim. Biophys. Acta">
        <title>Interaction of thrombospondin1 and CD36 contributes to obesity-associated podocytopathy.</title>
        <authorList>
            <person name="Cui W."/>
            <person name="Maimaitiyiming H."/>
            <person name="Zhou Q."/>
            <person name="Norman H."/>
            <person name="Zhou C."/>
            <person name="Wang S."/>
        </authorList>
    </citation>
    <scope>FUNCTION</scope>
    <scope>DISRUPTION PHENOTYPE</scope>
</reference>
<reference key="23">
    <citation type="journal article" date="2019" name="Cell Rep.">
        <title>DHHC4 and DHHC5 Facilitate Fatty Acid Uptake by Palmitoylating and Targeting CD36 to the Plasma Membrane.</title>
        <authorList>
            <person name="Wang J."/>
            <person name="Hao J.W."/>
            <person name="Wang X."/>
            <person name="Guo H."/>
            <person name="Sun H.H."/>
            <person name="Lai X.Y."/>
            <person name="Liu L.Y."/>
            <person name="Zhu M."/>
            <person name="Wang H.Y."/>
            <person name="Li Y.F."/>
            <person name="Yu L.Y."/>
            <person name="Xie C."/>
            <person name="Wang H.R."/>
            <person name="Mo W."/>
            <person name="Zhou H.M."/>
            <person name="Chen S."/>
            <person name="Liang G."/>
            <person name="Zhao T.J."/>
        </authorList>
    </citation>
    <scope>FUNCTION</scope>
    <scope>PALMITOYLATION</scope>
    <scope>SUBCELLULAR LOCATION</scope>
</reference>
<protein>
    <recommendedName>
        <fullName>Platelet glycoprotein 4</fullName>
    </recommendedName>
    <alternativeName>
        <fullName>Glycoprotein IIIb</fullName>
        <shortName>GPIIIB</shortName>
    </alternativeName>
    <alternativeName>
        <fullName>PAS IV</fullName>
    </alternativeName>
    <alternativeName>
        <fullName>PAS-4</fullName>
    </alternativeName>
    <alternativeName>
        <fullName>Platelet glycoprotein IV</fullName>
        <shortName>GPIV</shortName>
    </alternativeName>
    <cdAntigenName>CD36</cdAntigenName>
</protein>
<keyword id="KW-0130">Cell adhesion</keyword>
<keyword id="KW-1003">Cell membrane</keyword>
<keyword id="KW-1015">Disulfide bond</keyword>
<keyword id="KW-0325">Glycoprotein</keyword>
<keyword id="KW-0333">Golgi apparatus</keyword>
<keyword id="KW-1017">Isopeptide bond</keyword>
<keyword id="KW-0445">Lipid transport</keyword>
<keyword id="KW-0449">Lipoprotein</keyword>
<keyword id="KW-0472">Membrane</keyword>
<keyword id="KW-0564">Palmitate</keyword>
<keyword id="KW-0675">Receptor</keyword>
<keyword id="KW-1185">Reference proteome</keyword>
<keyword id="KW-0812">Transmembrane</keyword>
<keyword id="KW-1133">Transmembrane helix</keyword>
<keyword id="KW-0813">Transport</keyword>
<keyword id="KW-0832">Ubl conjugation</keyword>
<evidence type="ECO:0000250" key="1"/>
<evidence type="ECO:0000250" key="2">
    <source>
        <dbReference type="UniProtKB" id="P16671"/>
    </source>
</evidence>
<evidence type="ECO:0000250" key="3">
    <source>
        <dbReference type="UniProtKB" id="Q07969"/>
    </source>
</evidence>
<evidence type="ECO:0000255" key="4"/>
<evidence type="ECO:0000269" key="5">
    <source>
    </source>
</evidence>
<evidence type="ECO:0000269" key="6">
    <source>
    </source>
</evidence>
<evidence type="ECO:0000269" key="7">
    <source>
    </source>
</evidence>
<evidence type="ECO:0000269" key="8">
    <source>
    </source>
</evidence>
<evidence type="ECO:0000269" key="9">
    <source>
    </source>
</evidence>
<evidence type="ECO:0000269" key="10">
    <source>
    </source>
</evidence>
<evidence type="ECO:0000269" key="11">
    <source>
    </source>
</evidence>
<evidence type="ECO:0000269" key="12">
    <source>
    </source>
</evidence>
<evidence type="ECO:0000269" key="13">
    <source>
    </source>
</evidence>
<evidence type="ECO:0000269" key="14">
    <source>
    </source>
</evidence>
<evidence type="ECO:0000269" key="15">
    <source>
    </source>
</evidence>
<evidence type="ECO:0000269" key="16">
    <source>
    </source>
</evidence>
<evidence type="ECO:0000269" key="17">
    <source>
    </source>
</evidence>
<evidence type="ECO:0000269" key="18">
    <source>
    </source>
</evidence>
<evidence type="ECO:0000269" key="19">
    <source>
    </source>
</evidence>
<evidence type="ECO:0000269" key="20">
    <source>
    </source>
</evidence>
<evidence type="ECO:0000269" key="21">
    <source>
    </source>
</evidence>
<evidence type="ECO:0000269" key="22">
    <source>
    </source>
</evidence>
<evidence type="ECO:0000269" key="23">
    <source>
    </source>
</evidence>
<evidence type="ECO:0000269" key="24">
    <source>
    </source>
</evidence>
<evidence type="ECO:0000305" key="25"/>
<evidence type="ECO:0000305" key="26">
    <source>
    </source>
</evidence>